<dbReference type="EC" id="3.1.26.3"/>
<dbReference type="EMBL" id="BA000019">
    <property type="protein sequence ID" value="BAB75806.1"/>
    <property type="status" value="ALT_INIT"/>
    <property type="molecule type" value="Genomic_DNA"/>
</dbReference>
<dbReference type="PIR" id="AD2319">
    <property type="entry name" value="AD2319"/>
</dbReference>
<dbReference type="SMR" id="Q8YPT4"/>
<dbReference type="STRING" id="103690.gene:10496155"/>
<dbReference type="KEGG" id="ana:all4107"/>
<dbReference type="eggNOG" id="COG0571">
    <property type="taxonomic scope" value="Bacteria"/>
</dbReference>
<dbReference type="OrthoDB" id="9805026at2"/>
<dbReference type="Proteomes" id="UP000002483">
    <property type="component" value="Chromosome"/>
</dbReference>
<dbReference type="GO" id="GO:0005737">
    <property type="term" value="C:cytoplasm"/>
    <property type="evidence" value="ECO:0007669"/>
    <property type="project" value="UniProtKB-SubCell"/>
</dbReference>
<dbReference type="GO" id="GO:0003725">
    <property type="term" value="F:double-stranded RNA binding"/>
    <property type="evidence" value="ECO:0007669"/>
    <property type="project" value="TreeGrafter"/>
</dbReference>
<dbReference type="GO" id="GO:0046872">
    <property type="term" value="F:metal ion binding"/>
    <property type="evidence" value="ECO:0007669"/>
    <property type="project" value="UniProtKB-KW"/>
</dbReference>
<dbReference type="GO" id="GO:0004525">
    <property type="term" value="F:ribonuclease III activity"/>
    <property type="evidence" value="ECO:0007669"/>
    <property type="project" value="UniProtKB-UniRule"/>
</dbReference>
<dbReference type="GO" id="GO:0019843">
    <property type="term" value="F:rRNA binding"/>
    <property type="evidence" value="ECO:0007669"/>
    <property type="project" value="UniProtKB-KW"/>
</dbReference>
<dbReference type="GO" id="GO:0006397">
    <property type="term" value="P:mRNA processing"/>
    <property type="evidence" value="ECO:0007669"/>
    <property type="project" value="UniProtKB-UniRule"/>
</dbReference>
<dbReference type="GO" id="GO:0010468">
    <property type="term" value="P:regulation of gene expression"/>
    <property type="evidence" value="ECO:0007669"/>
    <property type="project" value="TreeGrafter"/>
</dbReference>
<dbReference type="GO" id="GO:0006364">
    <property type="term" value="P:rRNA processing"/>
    <property type="evidence" value="ECO:0007669"/>
    <property type="project" value="UniProtKB-UniRule"/>
</dbReference>
<dbReference type="GO" id="GO:0008033">
    <property type="term" value="P:tRNA processing"/>
    <property type="evidence" value="ECO:0007669"/>
    <property type="project" value="UniProtKB-KW"/>
</dbReference>
<dbReference type="CDD" id="cd10845">
    <property type="entry name" value="DSRM_RNAse_III_family"/>
    <property type="match status" value="1"/>
</dbReference>
<dbReference type="CDD" id="cd00593">
    <property type="entry name" value="RIBOc"/>
    <property type="match status" value="1"/>
</dbReference>
<dbReference type="Gene3D" id="3.30.160.20">
    <property type="match status" value="1"/>
</dbReference>
<dbReference type="Gene3D" id="1.10.1520.10">
    <property type="entry name" value="Ribonuclease III domain"/>
    <property type="match status" value="1"/>
</dbReference>
<dbReference type="HAMAP" id="MF_00104">
    <property type="entry name" value="RNase_III"/>
    <property type="match status" value="1"/>
</dbReference>
<dbReference type="InterPro" id="IPR014720">
    <property type="entry name" value="dsRBD_dom"/>
</dbReference>
<dbReference type="InterPro" id="IPR011907">
    <property type="entry name" value="RNase_III"/>
</dbReference>
<dbReference type="InterPro" id="IPR000999">
    <property type="entry name" value="RNase_III_dom"/>
</dbReference>
<dbReference type="InterPro" id="IPR036389">
    <property type="entry name" value="RNase_III_sf"/>
</dbReference>
<dbReference type="NCBIfam" id="TIGR02191">
    <property type="entry name" value="RNaseIII"/>
    <property type="match status" value="1"/>
</dbReference>
<dbReference type="PANTHER" id="PTHR11207:SF0">
    <property type="entry name" value="RIBONUCLEASE 3"/>
    <property type="match status" value="1"/>
</dbReference>
<dbReference type="PANTHER" id="PTHR11207">
    <property type="entry name" value="RIBONUCLEASE III"/>
    <property type="match status" value="1"/>
</dbReference>
<dbReference type="Pfam" id="PF00035">
    <property type="entry name" value="dsrm"/>
    <property type="match status" value="1"/>
</dbReference>
<dbReference type="Pfam" id="PF00636">
    <property type="entry name" value="Ribonuclease_3"/>
    <property type="match status" value="1"/>
</dbReference>
<dbReference type="SMART" id="SM00358">
    <property type="entry name" value="DSRM"/>
    <property type="match status" value="1"/>
</dbReference>
<dbReference type="SMART" id="SM00535">
    <property type="entry name" value="RIBOc"/>
    <property type="match status" value="1"/>
</dbReference>
<dbReference type="SUPFAM" id="SSF54768">
    <property type="entry name" value="dsRNA-binding domain-like"/>
    <property type="match status" value="1"/>
</dbReference>
<dbReference type="SUPFAM" id="SSF69065">
    <property type="entry name" value="RNase III domain-like"/>
    <property type="match status" value="1"/>
</dbReference>
<dbReference type="PROSITE" id="PS50137">
    <property type="entry name" value="DS_RBD"/>
    <property type="match status" value="1"/>
</dbReference>
<dbReference type="PROSITE" id="PS00517">
    <property type="entry name" value="RNASE_3_1"/>
    <property type="match status" value="1"/>
</dbReference>
<dbReference type="PROSITE" id="PS50142">
    <property type="entry name" value="RNASE_3_2"/>
    <property type="match status" value="1"/>
</dbReference>
<protein>
    <recommendedName>
        <fullName>Ribonuclease 3 2</fullName>
        <ecNumber>3.1.26.3</ecNumber>
    </recommendedName>
    <alternativeName>
        <fullName>Ribonuclease III 2</fullName>
        <shortName>RNase III 2</shortName>
    </alternativeName>
</protein>
<sequence length="242" mass="27052">MTLVYPRRQRQLESLVRKLGLPITAPIKWELLDLALTHPTVSESANYEQLEFVGDAVVRLAAAVMLWETYPDCPVGDFAAIRSVLVSDRILAQLAREYGLELHLLVAGSATSDKIGQESRLADAFEAVLGALYLSTSNLELIRPWLDHHFRQLAAEIRLDPARLNYKAALQEWTQAQFKVLPEYRVVEINQANRTQERFAAEVWLHGNKLGEGKGRSIKAAEQAAAKVAFLAITPPEEIANQ</sequence>
<accession>Q8YPT4</accession>
<keyword id="KW-0963">Cytoplasm</keyword>
<keyword id="KW-0255">Endonuclease</keyword>
<keyword id="KW-0378">Hydrolase</keyword>
<keyword id="KW-0460">Magnesium</keyword>
<keyword id="KW-0479">Metal-binding</keyword>
<keyword id="KW-0507">mRNA processing</keyword>
<keyword id="KW-0540">Nuclease</keyword>
<keyword id="KW-1185">Reference proteome</keyword>
<keyword id="KW-0694">RNA-binding</keyword>
<keyword id="KW-0698">rRNA processing</keyword>
<keyword id="KW-0699">rRNA-binding</keyword>
<keyword id="KW-0819">tRNA processing</keyword>
<organism>
    <name type="scientific">Nostoc sp. (strain PCC 7120 / SAG 25.82 / UTEX 2576)</name>
    <dbReference type="NCBI Taxonomy" id="103690"/>
    <lineage>
        <taxon>Bacteria</taxon>
        <taxon>Bacillati</taxon>
        <taxon>Cyanobacteriota</taxon>
        <taxon>Cyanophyceae</taxon>
        <taxon>Nostocales</taxon>
        <taxon>Nostocaceae</taxon>
        <taxon>Nostoc</taxon>
    </lineage>
</organism>
<feature type="chain" id="PRO_0000416610" description="Ribonuclease 3 2">
    <location>
        <begin position="1"/>
        <end position="242"/>
    </location>
</feature>
<feature type="domain" description="RNase III">
    <location>
        <begin position="12"/>
        <end position="137"/>
    </location>
</feature>
<feature type="domain" description="DRBM">
    <location>
        <begin position="165"/>
        <end position="235"/>
    </location>
</feature>
<feature type="active site" evidence="2">
    <location>
        <position position="55"/>
    </location>
</feature>
<feature type="active site" evidence="1">
    <location>
        <position position="126"/>
    </location>
</feature>
<feature type="binding site" evidence="1">
    <location>
        <position position="51"/>
    </location>
    <ligand>
        <name>Mg(2+)</name>
        <dbReference type="ChEBI" id="CHEBI:18420"/>
    </ligand>
</feature>
<feature type="binding site" evidence="1">
    <location>
        <position position="123"/>
    </location>
    <ligand>
        <name>Mg(2+)</name>
        <dbReference type="ChEBI" id="CHEBI:18420"/>
    </ligand>
</feature>
<feature type="binding site" evidence="1">
    <location>
        <position position="126"/>
    </location>
    <ligand>
        <name>Mg(2+)</name>
        <dbReference type="ChEBI" id="CHEBI:18420"/>
    </ligand>
</feature>
<name>RNC2_NOSS1</name>
<proteinExistence type="inferred from homology"/>
<evidence type="ECO:0000250" key="1"/>
<evidence type="ECO:0000255" key="2"/>
<evidence type="ECO:0000305" key="3"/>
<gene>
    <name type="primary">rnc2</name>
    <name type="ordered locus">all4107</name>
</gene>
<comment type="function">
    <text evidence="1">Digests double-stranded RNA. Involved in the processing of primary rRNA transcript to yield the immediate precursors to the large and small rRNAs (23S and 16S). Processes some mRNAs, and tRNAs when they are encoded in the rRNA operon. Processes pre-crRNA and tracrRNA of type II CRISPR loci if present in the organism (By similarity).</text>
</comment>
<comment type="catalytic activity">
    <reaction>
        <text>Endonucleolytic cleavage to 5'-phosphomonoester.</text>
        <dbReference type="EC" id="3.1.26.3"/>
    </reaction>
</comment>
<comment type="cofactor">
    <cofactor evidence="1">
        <name>Mg(2+)</name>
        <dbReference type="ChEBI" id="CHEBI:18420"/>
    </cofactor>
</comment>
<comment type="subunit">
    <text evidence="1">Homodimer.</text>
</comment>
<comment type="subcellular location">
    <subcellularLocation>
        <location evidence="1">Cytoplasm</location>
    </subcellularLocation>
</comment>
<comment type="similarity">
    <text evidence="3">Belongs to the ribonuclease III family.</text>
</comment>
<comment type="sequence caution" evidence="3">
    <conflict type="erroneous initiation">
        <sequence resource="EMBL-CDS" id="BAB75806"/>
    </conflict>
    <text>Truncated N-terminus.</text>
</comment>
<reference key="1">
    <citation type="journal article" date="2001" name="DNA Res.">
        <title>Complete genomic sequence of the filamentous nitrogen-fixing cyanobacterium Anabaena sp. strain PCC 7120.</title>
        <authorList>
            <person name="Kaneko T."/>
            <person name="Nakamura Y."/>
            <person name="Wolk C.P."/>
            <person name="Kuritz T."/>
            <person name="Sasamoto S."/>
            <person name="Watanabe A."/>
            <person name="Iriguchi M."/>
            <person name="Ishikawa A."/>
            <person name="Kawashima K."/>
            <person name="Kimura T."/>
            <person name="Kishida Y."/>
            <person name="Kohara M."/>
            <person name="Matsumoto M."/>
            <person name="Matsuno A."/>
            <person name="Muraki A."/>
            <person name="Nakazaki N."/>
            <person name="Shimpo S."/>
            <person name="Sugimoto M."/>
            <person name="Takazawa M."/>
            <person name="Yamada M."/>
            <person name="Yasuda M."/>
            <person name="Tabata S."/>
        </authorList>
    </citation>
    <scope>NUCLEOTIDE SEQUENCE [LARGE SCALE GENOMIC DNA]</scope>
    <source>
        <strain>PCC 7120 / SAG 25.82 / UTEX 2576</strain>
    </source>
</reference>